<protein>
    <recommendedName>
        <fullName evidence="1">Large ribosomal subunit protein bL32</fullName>
    </recommendedName>
    <alternativeName>
        <fullName evidence="3">50S ribosomal protein L32</fullName>
    </alternativeName>
</protein>
<dbReference type="EMBL" id="CP000708">
    <property type="protein sequence ID" value="ABQ61155.1"/>
    <property type="molecule type" value="Genomic_DNA"/>
</dbReference>
<dbReference type="RefSeq" id="WP_002964856.1">
    <property type="nucleotide sequence ID" value="NC_009505.1"/>
</dbReference>
<dbReference type="SMR" id="A5VSC1"/>
<dbReference type="GeneID" id="97533091"/>
<dbReference type="KEGG" id="bov:BOV_1710"/>
<dbReference type="HOGENOM" id="CLU_129084_2_2_5"/>
<dbReference type="Proteomes" id="UP000006383">
    <property type="component" value="Chromosome I"/>
</dbReference>
<dbReference type="GO" id="GO:0015934">
    <property type="term" value="C:large ribosomal subunit"/>
    <property type="evidence" value="ECO:0007669"/>
    <property type="project" value="InterPro"/>
</dbReference>
<dbReference type="GO" id="GO:0003735">
    <property type="term" value="F:structural constituent of ribosome"/>
    <property type="evidence" value="ECO:0007669"/>
    <property type="project" value="InterPro"/>
</dbReference>
<dbReference type="GO" id="GO:0006412">
    <property type="term" value="P:translation"/>
    <property type="evidence" value="ECO:0007669"/>
    <property type="project" value="UniProtKB-UniRule"/>
</dbReference>
<dbReference type="Gene3D" id="1.20.5.640">
    <property type="entry name" value="Single helix bin"/>
    <property type="match status" value="1"/>
</dbReference>
<dbReference type="HAMAP" id="MF_00340">
    <property type="entry name" value="Ribosomal_bL32"/>
    <property type="match status" value="1"/>
</dbReference>
<dbReference type="InterPro" id="IPR002677">
    <property type="entry name" value="Ribosomal_bL32"/>
</dbReference>
<dbReference type="InterPro" id="IPR044957">
    <property type="entry name" value="Ribosomal_bL32_bact"/>
</dbReference>
<dbReference type="InterPro" id="IPR011332">
    <property type="entry name" value="Ribosomal_zn-bd"/>
</dbReference>
<dbReference type="NCBIfam" id="TIGR01031">
    <property type="entry name" value="rpmF_bact"/>
    <property type="match status" value="1"/>
</dbReference>
<dbReference type="PANTHER" id="PTHR35534">
    <property type="entry name" value="50S RIBOSOMAL PROTEIN L32"/>
    <property type="match status" value="1"/>
</dbReference>
<dbReference type="PANTHER" id="PTHR35534:SF1">
    <property type="entry name" value="LARGE RIBOSOMAL SUBUNIT PROTEIN BL32"/>
    <property type="match status" value="1"/>
</dbReference>
<dbReference type="Pfam" id="PF01783">
    <property type="entry name" value="Ribosomal_L32p"/>
    <property type="match status" value="1"/>
</dbReference>
<dbReference type="SUPFAM" id="SSF57829">
    <property type="entry name" value="Zn-binding ribosomal proteins"/>
    <property type="match status" value="1"/>
</dbReference>
<gene>
    <name evidence="1" type="primary">rpmF</name>
    <name type="ordered locus">BOV_1710</name>
</gene>
<proteinExistence type="inferred from homology"/>
<reference key="1">
    <citation type="journal article" date="2009" name="PLoS ONE">
        <title>Genome degradation in Brucella ovis corresponds with narrowing of its host range and tissue tropism.</title>
        <authorList>
            <person name="Tsolis R.M."/>
            <person name="Seshadri R."/>
            <person name="Santos R.L."/>
            <person name="Sangari F.J."/>
            <person name="Lobo J.M."/>
            <person name="de Jong M.F."/>
            <person name="Ren Q."/>
            <person name="Myers G."/>
            <person name="Brinkac L.M."/>
            <person name="Nelson W.C."/>
            <person name="Deboy R.T."/>
            <person name="Angiuoli S."/>
            <person name="Khouri H."/>
            <person name="Dimitrov G."/>
            <person name="Robinson J.R."/>
            <person name="Mulligan S."/>
            <person name="Walker R.L."/>
            <person name="Elzer P.E."/>
            <person name="Hassan K.A."/>
            <person name="Paulsen I.T."/>
        </authorList>
    </citation>
    <scope>NUCLEOTIDE SEQUENCE [LARGE SCALE GENOMIC DNA]</scope>
    <source>
        <strain>ATCC 25840 / 63/290 / NCTC 10512</strain>
    </source>
</reference>
<evidence type="ECO:0000255" key="1">
    <source>
        <dbReference type="HAMAP-Rule" id="MF_00340"/>
    </source>
</evidence>
<evidence type="ECO:0000256" key="2">
    <source>
        <dbReference type="SAM" id="MobiDB-lite"/>
    </source>
</evidence>
<evidence type="ECO:0000305" key="3"/>
<keyword id="KW-0687">Ribonucleoprotein</keyword>
<keyword id="KW-0689">Ribosomal protein</keyword>
<accession>A5VSC1</accession>
<organism>
    <name type="scientific">Brucella ovis (strain ATCC 25840 / 63/290 / NCTC 10512)</name>
    <dbReference type="NCBI Taxonomy" id="444178"/>
    <lineage>
        <taxon>Bacteria</taxon>
        <taxon>Pseudomonadati</taxon>
        <taxon>Pseudomonadota</taxon>
        <taxon>Alphaproteobacteria</taxon>
        <taxon>Hyphomicrobiales</taxon>
        <taxon>Brucellaceae</taxon>
        <taxon>Brucella/Ochrobactrum group</taxon>
        <taxon>Brucella</taxon>
    </lineage>
</organism>
<sequence>MAVPKRKTSPSRRGMRRSADALKAPTYVEDKNSGELRRPHHIDLKSGMYRGRQVLEPKE</sequence>
<comment type="similarity">
    <text evidence="1">Belongs to the bacterial ribosomal protein bL32 family.</text>
</comment>
<feature type="chain" id="PRO_1000005046" description="Large ribosomal subunit protein bL32">
    <location>
        <begin position="1"/>
        <end position="59"/>
    </location>
</feature>
<feature type="region of interest" description="Disordered" evidence="2">
    <location>
        <begin position="1"/>
        <end position="59"/>
    </location>
</feature>
<feature type="compositionally biased region" description="Basic residues" evidence="2">
    <location>
        <begin position="1"/>
        <end position="16"/>
    </location>
</feature>
<feature type="compositionally biased region" description="Basic and acidic residues" evidence="2">
    <location>
        <begin position="28"/>
        <end position="44"/>
    </location>
</feature>
<name>RL32_BRUO2</name>